<organism>
    <name type="scientific">Salmonella schwarzengrund (strain CVM19633)</name>
    <dbReference type="NCBI Taxonomy" id="439843"/>
    <lineage>
        <taxon>Bacteria</taxon>
        <taxon>Pseudomonadati</taxon>
        <taxon>Pseudomonadota</taxon>
        <taxon>Gammaproteobacteria</taxon>
        <taxon>Enterobacterales</taxon>
        <taxon>Enterobacteriaceae</taxon>
        <taxon>Salmonella</taxon>
    </lineage>
</organism>
<comment type="function">
    <text evidence="1">Specifically catalyzes the cleavage of the D-lactyl ether substituent of MurNAc 6-phosphate, producing GlcNAc 6-phosphate and D-lactate. Together with AnmK, is also required for the utilization of anhydro-N-acetylmuramic acid (anhMurNAc) either imported from the medium or derived from its own cell wall murein, and thus plays a role in cell wall recycling.</text>
</comment>
<comment type="catalytic activity">
    <reaction evidence="1">
        <text>N-acetyl-D-muramate 6-phosphate + H2O = N-acetyl-D-glucosamine 6-phosphate + (R)-lactate</text>
        <dbReference type="Rhea" id="RHEA:26410"/>
        <dbReference type="ChEBI" id="CHEBI:15377"/>
        <dbReference type="ChEBI" id="CHEBI:16004"/>
        <dbReference type="ChEBI" id="CHEBI:57513"/>
        <dbReference type="ChEBI" id="CHEBI:58722"/>
        <dbReference type="EC" id="4.2.1.126"/>
    </reaction>
</comment>
<comment type="pathway">
    <text evidence="1">Amino-sugar metabolism; 1,6-anhydro-N-acetylmuramate degradation.</text>
</comment>
<comment type="pathway">
    <text evidence="1">Amino-sugar metabolism; N-acetylmuramate degradation.</text>
</comment>
<comment type="pathway">
    <text evidence="1">Cell wall biogenesis; peptidoglycan recycling.</text>
</comment>
<comment type="subunit">
    <text evidence="1">Homodimer.</text>
</comment>
<comment type="induction">
    <text evidence="1">Induced by MurNAc 6-phosphate that releases the repressor MurR from the DNA. Repressed by MurR in the absence of MurNAc 6-phosphate.</text>
</comment>
<comment type="miscellaneous">
    <text evidence="1">A lyase-type mechanism (elimination/hydration) is suggested for the cleavage of the lactyl ether bond of MurNAc 6-phosphate, with the formation of an alpha,beta-unsaturated aldehyde intermediate with (E)-stereochemistry, followed by the syn addition of water to give product.</text>
</comment>
<comment type="similarity">
    <text evidence="1">Belongs to the GCKR-like family. MurNAc-6-P etherase subfamily.</text>
</comment>
<gene>
    <name evidence="1" type="primary">murQ</name>
    <name type="ordered locus">SeSA_A2814</name>
</gene>
<protein>
    <recommendedName>
        <fullName evidence="1">N-acetylmuramic acid 6-phosphate etherase</fullName>
        <shortName evidence="1">MurNAc-6-P etherase</shortName>
        <ecNumber evidence="1">4.2.1.126</ecNumber>
    </recommendedName>
    <alternativeName>
        <fullName evidence="1">N-acetylmuramic acid 6-phosphate hydrolase</fullName>
    </alternativeName>
    <alternativeName>
        <fullName evidence="1">N-acetylmuramic acid 6-phosphate lyase</fullName>
    </alternativeName>
</protein>
<feature type="chain" id="PRO_1000092318" description="N-acetylmuramic acid 6-phosphate etherase">
    <location>
        <begin position="1"/>
        <end position="297"/>
    </location>
</feature>
<feature type="domain" description="SIS" evidence="1">
    <location>
        <begin position="55"/>
        <end position="218"/>
    </location>
</feature>
<feature type="active site" description="Proton donor" evidence="1">
    <location>
        <position position="83"/>
    </location>
</feature>
<feature type="active site" evidence="1">
    <location>
        <position position="114"/>
    </location>
</feature>
<dbReference type="EC" id="4.2.1.126" evidence="1"/>
<dbReference type="EMBL" id="CP001127">
    <property type="protein sequence ID" value="ACF92323.1"/>
    <property type="molecule type" value="Genomic_DNA"/>
</dbReference>
<dbReference type="RefSeq" id="WP_001048531.1">
    <property type="nucleotide sequence ID" value="NC_011094.1"/>
</dbReference>
<dbReference type="SMR" id="B4TS04"/>
<dbReference type="KEGG" id="sew:SeSA_A2814"/>
<dbReference type="HOGENOM" id="CLU_049049_1_1_6"/>
<dbReference type="UniPathway" id="UPA00342"/>
<dbReference type="UniPathway" id="UPA00343"/>
<dbReference type="UniPathway" id="UPA00544"/>
<dbReference type="Proteomes" id="UP000001865">
    <property type="component" value="Chromosome"/>
</dbReference>
<dbReference type="GO" id="GO:0097367">
    <property type="term" value="F:carbohydrate derivative binding"/>
    <property type="evidence" value="ECO:0007669"/>
    <property type="project" value="InterPro"/>
</dbReference>
<dbReference type="GO" id="GO:0016835">
    <property type="term" value="F:carbon-oxygen lyase activity"/>
    <property type="evidence" value="ECO:0007669"/>
    <property type="project" value="UniProtKB-UniRule"/>
</dbReference>
<dbReference type="GO" id="GO:0016803">
    <property type="term" value="F:ether hydrolase activity"/>
    <property type="evidence" value="ECO:0007669"/>
    <property type="project" value="TreeGrafter"/>
</dbReference>
<dbReference type="GO" id="GO:0097175">
    <property type="term" value="P:1,6-anhydro-N-acetyl-beta-muramic acid catabolic process"/>
    <property type="evidence" value="ECO:0007669"/>
    <property type="project" value="UniProtKB-UniRule"/>
</dbReference>
<dbReference type="GO" id="GO:0046348">
    <property type="term" value="P:amino sugar catabolic process"/>
    <property type="evidence" value="ECO:0007669"/>
    <property type="project" value="InterPro"/>
</dbReference>
<dbReference type="GO" id="GO:0097173">
    <property type="term" value="P:N-acetylmuramic acid catabolic process"/>
    <property type="evidence" value="ECO:0007669"/>
    <property type="project" value="UniProtKB-UniPathway"/>
</dbReference>
<dbReference type="GO" id="GO:0009254">
    <property type="term" value="P:peptidoglycan turnover"/>
    <property type="evidence" value="ECO:0007669"/>
    <property type="project" value="UniProtKB-UniRule"/>
</dbReference>
<dbReference type="CDD" id="cd05007">
    <property type="entry name" value="SIS_Etherase"/>
    <property type="match status" value="1"/>
</dbReference>
<dbReference type="FunFam" id="1.10.8.1080:FF:000001">
    <property type="entry name" value="N-acetylmuramic acid 6-phosphate etherase"/>
    <property type="match status" value="1"/>
</dbReference>
<dbReference type="FunFam" id="3.40.50.10490:FF:000014">
    <property type="entry name" value="N-acetylmuramic acid 6-phosphate etherase"/>
    <property type="match status" value="1"/>
</dbReference>
<dbReference type="Gene3D" id="1.10.8.1080">
    <property type="match status" value="1"/>
</dbReference>
<dbReference type="Gene3D" id="3.40.50.10490">
    <property type="entry name" value="Glucose-6-phosphate isomerase like protein, domain 1"/>
    <property type="match status" value="1"/>
</dbReference>
<dbReference type="HAMAP" id="MF_00068">
    <property type="entry name" value="MurQ"/>
    <property type="match status" value="1"/>
</dbReference>
<dbReference type="InterPro" id="IPR005488">
    <property type="entry name" value="Etherase_MurQ"/>
</dbReference>
<dbReference type="InterPro" id="IPR005486">
    <property type="entry name" value="Glucokinase_regulatory_CS"/>
</dbReference>
<dbReference type="InterPro" id="IPR040190">
    <property type="entry name" value="MURQ/GCKR"/>
</dbReference>
<dbReference type="InterPro" id="IPR001347">
    <property type="entry name" value="SIS_dom"/>
</dbReference>
<dbReference type="InterPro" id="IPR046348">
    <property type="entry name" value="SIS_dom_sf"/>
</dbReference>
<dbReference type="NCBIfam" id="TIGR00274">
    <property type="entry name" value="N-acetylmuramic acid 6-phosphate etherase"/>
    <property type="match status" value="1"/>
</dbReference>
<dbReference type="NCBIfam" id="NF003915">
    <property type="entry name" value="PRK05441.1"/>
    <property type="match status" value="1"/>
</dbReference>
<dbReference type="NCBIfam" id="NF009222">
    <property type="entry name" value="PRK12570.1"/>
    <property type="match status" value="1"/>
</dbReference>
<dbReference type="PANTHER" id="PTHR10088">
    <property type="entry name" value="GLUCOKINASE REGULATORY PROTEIN"/>
    <property type="match status" value="1"/>
</dbReference>
<dbReference type="PANTHER" id="PTHR10088:SF5">
    <property type="entry name" value="N-ACETYLMURAMIC ACID 6-PHOSPHATE ETHERASE"/>
    <property type="match status" value="1"/>
</dbReference>
<dbReference type="Pfam" id="PF22645">
    <property type="entry name" value="GKRP_SIS_N"/>
    <property type="match status" value="1"/>
</dbReference>
<dbReference type="SUPFAM" id="SSF53697">
    <property type="entry name" value="SIS domain"/>
    <property type="match status" value="1"/>
</dbReference>
<dbReference type="PROSITE" id="PS01272">
    <property type="entry name" value="GCKR"/>
    <property type="match status" value="1"/>
</dbReference>
<dbReference type="PROSITE" id="PS51464">
    <property type="entry name" value="SIS"/>
    <property type="match status" value="1"/>
</dbReference>
<name>MURQ_SALSV</name>
<accession>B4TS04</accession>
<sequence>MNLGTLVSETRNPQTMDLDALPTPELVKRFNEQDTLVAEAVKATLPDVARAVDAAAAALKSGGRIIYMGAGTSGRLGVLDASECPPTFGVPHGLVVGLIAGGPGALLKAVEGAEDSQQAGEDDLVALNLQEQDLVVGLAASGRTPYVIGGLRYARQSGCTTVAVSCNPDSPIAREANIAISPVVGPEALTGSTRLKSGTAQKMVLNMISTGAMVKFGKVYQNLMVDMKATNVKLVDRACRMVVEATGIGREEAETLLKQTDFEVKPAILMALTGLDAAAAREKLAAHQGFLRAALEH</sequence>
<keyword id="KW-0119">Carbohydrate metabolism</keyword>
<keyword id="KW-0456">Lyase</keyword>
<proteinExistence type="inferred from homology"/>
<evidence type="ECO:0000255" key="1">
    <source>
        <dbReference type="HAMAP-Rule" id="MF_00068"/>
    </source>
</evidence>
<reference key="1">
    <citation type="journal article" date="2011" name="J. Bacteriol.">
        <title>Comparative genomics of 28 Salmonella enterica isolates: evidence for CRISPR-mediated adaptive sublineage evolution.</title>
        <authorList>
            <person name="Fricke W.F."/>
            <person name="Mammel M.K."/>
            <person name="McDermott P.F."/>
            <person name="Tartera C."/>
            <person name="White D.G."/>
            <person name="Leclerc J.E."/>
            <person name="Ravel J."/>
            <person name="Cebula T.A."/>
        </authorList>
    </citation>
    <scope>NUCLEOTIDE SEQUENCE [LARGE SCALE GENOMIC DNA]</scope>
    <source>
        <strain>CVM19633</strain>
    </source>
</reference>